<name>PA2BD_BUNFA</name>
<organism>
    <name type="scientific">Bungarus fasciatus</name>
    <name type="common">Banded krait</name>
    <name type="synonym">Pseudoboa fasciata</name>
    <dbReference type="NCBI Taxonomy" id="8613"/>
    <lineage>
        <taxon>Eukaryota</taxon>
        <taxon>Metazoa</taxon>
        <taxon>Chordata</taxon>
        <taxon>Craniata</taxon>
        <taxon>Vertebrata</taxon>
        <taxon>Euteleostomi</taxon>
        <taxon>Lepidosauria</taxon>
        <taxon>Squamata</taxon>
        <taxon>Bifurcata</taxon>
        <taxon>Unidentata</taxon>
        <taxon>Episquamata</taxon>
        <taxon>Toxicofera</taxon>
        <taxon>Serpentes</taxon>
        <taxon>Colubroidea</taxon>
        <taxon>Elapidae</taxon>
        <taxon>Bungarinae</taxon>
        <taxon>Bungarus</taxon>
    </lineage>
</organism>
<proteinExistence type="evidence at protein level"/>
<reference key="1">
    <citation type="journal article" date="1981" name="Dong Wu Xue Yan Jiu">
        <title>The amino acid composition and partial sequence of cytotoxin XIII from Canton Bungarus fasciatus venom.</title>
        <authorList>
            <person name="Zhang Y.S."/>
            <person name="Wu S.L."/>
            <person name="Chen Y.C."/>
            <person name="Chen S.Q."/>
        </authorList>
    </citation>
    <scope>PROTEIN SEQUENCE</scope>
    <source>
        <tissue>Venom</tissue>
    </source>
</reference>
<feature type="chain" id="PRO_0000161633" description="Basic phospholipase A2 13">
    <location>
        <begin position="1"/>
        <end position="31" status="greater than"/>
    </location>
</feature>
<feature type="non-terminal residue">
    <location>
        <position position="31"/>
    </location>
</feature>
<accession>Q7LZQ6</accession>
<sequence>NLYQFKNMIECAGTRTWIAYVKYGAYTYAYT</sequence>
<evidence type="ECO:0000250" key="1"/>
<evidence type="ECO:0000305" key="2"/>
<keyword id="KW-0106">Calcium</keyword>
<keyword id="KW-0903">Direct protein sequencing</keyword>
<keyword id="KW-0378">Hydrolase</keyword>
<keyword id="KW-0442">Lipid degradation</keyword>
<keyword id="KW-0443">Lipid metabolism</keyword>
<keyword id="KW-0528">Neurotoxin</keyword>
<keyword id="KW-0638">Presynaptic neurotoxin</keyword>
<keyword id="KW-0964">Secreted</keyword>
<keyword id="KW-0800">Toxin</keyword>
<comment type="function">
    <text evidence="1">Snake venom phospholipase A2 (PLA2) that inhibits neuromuscular transmission by blocking acetylcholine release from the nerve termini. PLA2 catalyzes the calcium-dependent hydrolysis of the 2-acyl groups in 3-sn-phosphoglycerides (By similarity).</text>
</comment>
<comment type="catalytic activity">
    <reaction>
        <text>a 1,2-diacyl-sn-glycero-3-phosphocholine + H2O = a 1-acyl-sn-glycero-3-phosphocholine + a fatty acid + H(+)</text>
        <dbReference type="Rhea" id="RHEA:15801"/>
        <dbReference type="ChEBI" id="CHEBI:15377"/>
        <dbReference type="ChEBI" id="CHEBI:15378"/>
        <dbReference type="ChEBI" id="CHEBI:28868"/>
        <dbReference type="ChEBI" id="CHEBI:57643"/>
        <dbReference type="ChEBI" id="CHEBI:58168"/>
        <dbReference type="EC" id="3.1.1.4"/>
    </reaction>
</comment>
<comment type="cofactor">
    <cofactor evidence="1">
        <name>Ca(2+)</name>
        <dbReference type="ChEBI" id="CHEBI:29108"/>
    </cofactor>
    <text evidence="1">Binds 1 Ca(2+) ion.</text>
</comment>
<comment type="subcellular location">
    <subcellularLocation>
        <location>Secreted</location>
    </subcellularLocation>
</comment>
<comment type="tissue specificity">
    <text>Expressed by the venom gland.</text>
</comment>
<comment type="similarity">
    <text evidence="2">Belongs to the phospholipase A2 family. Group I subfamily.</text>
</comment>
<dbReference type="EC" id="3.1.1.4"/>
<dbReference type="PIR" id="JC0008">
    <property type="entry name" value="JC0008"/>
</dbReference>
<dbReference type="SMR" id="Q7LZQ6"/>
<dbReference type="GO" id="GO:0005576">
    <property type="term" value="C:extracellular region"/>
    <property type="evidence" value="ECO:0007669"/>
    <property type="project" value="UniProtKB-SubCell"/>
</dbReference>
<dbReference type="GO" id="GO:0004623">
    <property type="term" value="F:phospholipase A2 activity"/>
    <property type="evidence" value="ECO:0007669"/>
    <property type="project" value="UniProtKB-EC"/>
</dbReference>
<dbReference type="GO" id="GO:0090729">
    <property type="term" value="F:toxin activity"/>
    <property type="evidence" value="ECO:0007669"/>
    <property type="project" value="UniProtKB-KW"/>
</dbReference>
<dbReference type="GO" id="GO:0050482">
    <property type="term" value="P:arachidonate secretion"/>
    <property type="evidence" value="ECO:0007669"/>
    <property type="project" value="InterPro"/>
</dbReference>
<dbReference type="GO" id="GO:0016042">
    <property type="term" value="P:lipid catabolic process"/>
    <property type="evidence" value="ECO:0007669"/>
    <property type="project" value="UniProtKB-KW"/>
</dbReference>
<dbReference type="GO" id="GO:0006644">
    <property type="term" value="P:phospholipid metabolic process"/>
    <property type="evidence" value="ECO:0007669"/>
    <property type="project" value="InterPro"/>
</dbReference>
<dbReference type="InterPro" id="IPR036444">
    <property type="entry name" value="PLipase_A2_dom_sf"/>
</dbReference>
<dbReference type="SUPFAM" id="SSF48619">
    <property type="entry name" value="Phospholipase A2, PLA2"/>
    <property type="match status" value="1"/>
</dbReference>
<protein>
    <recommendedName>
        <fullName>Basic phospholipase A2 13</fullName>
        <shortName>svPLA2</shortName>
        <ecNumber>3.1.1.4</ecNumber>
    </recommendedName>
    <alternativeName>
        <fullName>Cytotoxin XIII</fullName>
    </alternativeName>
    <alternativeName>
        <fullName>Phosphatidylcholine 2-acylhydrolase</fullName>
    </alternativeName>
    <alternativeName>
        <fullName>Phospholipase A2 XIII</fullName>
    </alternativeName>
</protein>